<dbReference type="EC" id="2.7.7.48" evidence="3"/>
<dbReference type="EC" id="3.6.1.-" evidence="2"/>
<dbReference type="EC" id="2.7.7.88" evidence="2"/>
<dbReference type="EC" id="2.1.1.375" evidence="2"/>
<dbReference type="EMBL" id="X57559">
    <property type="protein sequence ID" value="CAA40788.1"/>
    <property type="molecule type" value="Genomic_RNA"/>
</dbReference>
<dbReference type="PIR" id="S16664">
    <property type="entry name" value="S16664"/>
</dbReference>
<dbReference type="SMR" id="P26676"/>
<dbReference type="DrugBank" id="DB00811">
    <property type="generic name" value="Ribavirin"/>
</dbReference>
<dbReference type="DrugBank" id="DB06408">
    <property type="generic name" value="Taribavirin"/>
</dbReference>
<dbReference type="KEGG" id="vg:935189"/>
<dbReference type="Proteomes" id="UP000000472">
    <property type="component" value="Segment"/>
</dbReference>
<dbReference type="GO" id="GO:0030430">
    <property type="term" value="C:host cell cytoplasm"/>
    <property type="evidence" value="ECO:0007669"/>
    <property type="project" value="UniProtKB-SubCell"/>
</dbReference>
<dbReference type="GO" id="GO:0044423">
    <property type="term" value="C:virion component"/>
    <property type="evidence" value="ECO:0007669"/>
    <property type="project" value="UniProtKB-KW"/>
</dbReference>
<dbReference type="GO" id="GO:0005524">
    <property type="term" value="F:ATP binding"/>
    <property type="evidence" value="ECO:0007669"/>
    <property type="project" value="UniProtKB-KW"/>
</dbReference>
<dbReference type="GO" id="GO:0003924">
    <property type="term" value="F:GTPase activity"/>
    <property type="evidence" value="ECO:0007669"/>
    <property type="project" value="RHEA"/>
</dbReference>
<dbReference type="GO" id="GO:0004482">
    <property type="term" value="F:mRNA 5'-cap (guanine-N7-)-methyltransferase activity"/>
    <property type="evidence" value="ECO:0007669"/>
    <property type="project" value="InterPro"/>
</dbReference>
<dbReference type="GO" id="GO:0003968">
    <property type="term" value="F:RNA-directed RNA polymerase activity"/>
    <property type="evidence" value="ECO:0007669"/>
    <property type="project" value="UniProtKB-KW"/>
</dbReference>
<dbReference type="Gene3D" id="3.40.50.12760">
    <property type="match status" value="1"/>
</dbReference>
<dbReference type="InterPro" id="IPR039736">
    <property type="entry name" value="L_poly_C"/>
</dbReference>
<dbReference type="InterPro" id="IPR026890">
    <property type="entry name" value="Mononeg_mRNAcap"/>
</dbReference>
<dbReference type="InterPro" id="IPR014023">
    <property type="entry name" value="Mononeg_RNA_pol_cat"/>
</dbReference>
<dbReference type="InterPro" id="IPR025786">
    <property type="entry name" value="Mononega_L_MeTrfase"/>
</dbReference>
<dbReference type="InterPro" id="IPR016269">
    <property type="entry name" value="RNA-dir_pol_paramyxovirus"/>
</dbReference>
<dbReference type="InterPro" id="IPR002877">
    <property type="entry name" value="RNA_MeTrfase_FtsJ_dom"/>
</dbReference>
<dbReference type="NCBIfam" id="TIGR04198">
    <property type="entry name" value="paramyx_RNAcap"/>
    <property type="match status" value="1"/>
</dbReference>
<dbReference type="Pfam" id="PF01728">
    <property type="entry name" value="FtsJ"/>
    <property type="match status" value="1"/>
</dbReference>
<dbReference type="Pfam" id="PF14318">
    <property type="entry name" value="Mononeg_mRNAcap"/>
    <property type="match status" value="1"/>
</dbReference>
<dbReference type="Pfam" id="PF00946">
    <property type="entry name" value="Mononeg_RNA_pol"/>
    <property type="match status" value="1"/>
</dbReference>
<dbReference type="PIRSF" id="PIRSF000830">
    <property type="entry name" value="RNA_pol_ParamyxoV"/>
    <property type="match status" value="1"/>
</dbReference>
<dbReference type="PROSITE" id="PS50526">
    <property type="entry name" value="RDRP_SSRNA_NEG_NONSEG"/>
    <property type="match status" value="1"/>
</dbReference>
<dbReference type="PROSITE" id="PS51590">
    <property type="entry name" value="SAM_MT_MNV_L"/>
    <property type="match status" value="1"/>
</dbReference>
<proteinExistence type="inferred from homology"/>
<protein>
    <recommendedName>
        <fullName>RNA-directed RNA polymerase L</fullName>
        <shortName>Protein L</shortName>
    </recommendedName>
    <alternativeName>
        <fullName>Large structural protein</fullName>
    </alternativeName>
    <alternativeName>
        <fullName>Replicase</fullName>
    </alternativeName>
    <alternativeName>
        <fullName>Transcriptase</fullName>
    </alternativeName>
    <domain>
        <recommendedName>
            <fullName>RNA-directed RNA polymerase</fullName>
            <ecNumber evidence="3">2.7.7.48</ecNumber>
        </recommendedName>
    </domain>
    <domain>
        <recommendedName>
            <fullName evidence="2">GTP phosphohydrolase</fullName>
            <ecNumber evidence="2">3.6.1.-</ecNumber>
        </recommendedName>
    </domain>
    <domain>
        <recommendedName>
            <fullName evidence="7">GDP polyribonucleotidyltransferase</fullName>
            <ecNumber evidence="2">2.7.7.88</ecNumber>
        </recommendedName>
        <alternativeName>
            <fullName evidence="7">PRNTase</fullName>
        </alternativeName>
    </domain>
    <domain>
        <recommendedName>
            <fullName evidence="7">mRNA cap methyltransferase</fullName>
            <ecNumber evidence="2">2.1.1.375</ecNumber>
        </recommendedName>
        <alternativeName>
            <fullName evidence="2">mRNA (guanine-N(7)-)-methyltransferase</fullName>
            <shortName evidence="2">G-N7-MTase</shortName>
        </alternativeName>
        <alternativeName>
            <fullName evidence="2">mRNA (nucleoside-2'-O-)-methyltransferase</fullName>
            <shortName evidence="2">N1-2'-O-MTase</shortName>
        </alternativeName>
    </domain>
</protein>
<accession>P26676</accession>
<organism>
    <name type="scientific">Human parainfluenza 2 virus (strain Toshiba)</name>
    <name type="common">HPIV-2</name>
    <dbReference type="NCBI Taxonomy" id="11214"/>
    <lineage>
        <taxon>Viruses</taxon>
        <taxon>Riboviria</taxon>
        <taxon>Orthornavirae</taxon>
        <taxon>Negarnaviricota</taxon>
        <taxon>Haploviricotina</taxon>
        <taxon>Monjiviricetes</taxon>
        <taxon>Mononegavirales</taxon>
        <taxon>Paramyxoviridae</taxon>
        <taxon>Rubulavirinae</taxon>
        <taxon>Orthorubulavirus</taxon>
        <taxon>Orthorubulavirus laryngotracheitidis</taxon>
        <taxon>Human parainfluenza 2 virus</taxon>
    </lineage>
</organism>
<keyword id="KW-0067">ATP-binding</keyword>
<keyword id="KW-1035">Host cytoplasm</keyword>
<keyword id="KW-0378">Hydrolase</keyword>
<keyword id="KW-0489">Methyltransferase</keyword>
<keyword id="KW-0506">mRNA capping</keyword>
<keyword id="KW-0507">mRNA processing</keyword>
<keyword id="KW-0511">Multifunctional enzyme</keyword>
<keyword id="KW-0547">Nucleotide-binding</keyword>
<keyword id="KW-0548">Nucleotidyltransferase</keyword>
<keyword id="KW-1185">Reference proteome</keyword>
<keyword id="KW-0696">RNA-directed RNA polymerase</keyword>
<keyword id="KW-0949">S-adenosyl-L-methionine</keyword>
<keyword id="KW-0808">Transferase</keyword>
<keyword id="KW-0693">Viral RNA replication</keyword>
<keyword id="KW-0946">Virion</keyword>
<feature type="chain" id="PRO_0000142734" description="RNA-directed RNA polymerase L">
    <location>
        <begin position="1"/>
        <end position="2262"/>
    </location>
</feature>
<feature type="domain" description="RdRp catalytic" evidence="5">
    <location>
        <begin position="661"/>
        <end position="844"/>
    </location>
</feature>
<feature type="domain" description="Mononegavirus-type SAM-dependent 2'-O-MTase" evidence="6">
    <location>
        <begin position="1780"/>
        <end position="1993"/>
    </location>
</feature>
<feature type="binding site" evidence="4">
    <location>
        <begin position="1810"/>
        <end position="1819"/>
    </location>
    <ligand>
        <name>ATP</name>
        <dbReference type="ChEBI" id="CHEBI:30616"/>
    </ligand>
</feature>
<name>L_PI2HT</name>
<organismHost>
    <name type="scientific">Homo sapiens</name>
    <name type="common">Human</name>
    <dbReference type="NCBI Taxonomy" id="9606"/>
</organismHost>
<evidence type="ECO:0000250" key="1"/>
<evidence type="ECO:0000250" key="2">
    <source>
        <dbReference type="UniProtKB" id="P03523"/>
    </source>
</evidence>
<evidence type="ECO:0000250" key="3">
    <source>
        <dbReference type="UniProtKB" id="P28887"/>
    </source>
</evidence>
<evidence type="ECO:0000255" key="4"/>
<evidence type="ECO:0000255" key="5">
    <source>
        <dbReference type="PROSITE-ProRule" id="PRU00539"/>
    </source>
</evidence>
<evidence type="ECO:0000255" key="6">
    <source>
        <dbReference type="PROSITE-ProRule" id="PRU00923"/>
    </source>
</evidence>
<evidence type="ECO:0000305" key="7"/>
<sequence length="2262" mass="256383">MAASSEILLPEVHLNSPIVKHKLIYYLLLGHFPHDLDISEISPLHNNDWDQIAREESNLAERLGVAKSELIKRVPAFRATRWRSHAAVLIWPSCIPFLVKFLPHSKLQPVEQWYKLINASCNTISDSIDRCMENISIKLTGKNNLFSRSRGTAGAGKNSKITLNDIQSIWESNKWQPNVSLWLTIKYQMRQLIMHQSSRQPTDLVHIVDTRSGLIVITPELVICFDRLNSVLMYFTFEMTLMVSDMFEGRMNVTALCTISHYLSPLGPRIDRLFSIVDELAQLLGDTVYKVIASLESLVYGCLQLKDPVVELAGSFHSFITQEIIDILIGSKALDKDESITVTTQLLDIFSNLSPDLIAEMLCLMRLWGHPTLTAAQVGKVRESMCAGKLLDFPTIMKTLAFFHTILINGYRRKKNGMWPPLILPKNASKSLIEFQHDNAEISYEYTLKHWKEISLIEFRKCFDFDPGEELSIFMKDKAISAPRSDWMSVFRRSLIKQRHQRHHIPMPNPFNRRLLLNFLEDDSFDPVAELRYVTGGEYLQDDTFCASYSLKEKEIKPDGRIFAKLTNRMRSCQVIAEAILANHAGTLMKENGVVLNQLSLTKSLLTMSQIGIISEKAKRYTRDNISSQGFHTIKTDSKNKRKSKTASSYLTDPDDTFELSACFITTDLAKYCLQWRYQTIIHFARTLNRMYGVPHLFEWIHLRLIRSTLYVGDPFNPPAATDAFDLDKVLNGDIFIVSKGGIEGLCQKMWTMISISVIILSSAESKTRVMSMVQGDNQAIAVTTRVPRSLPSIQKKELAYAASKLFFERLRANNYGLGHQLKAQETIISSTFFIYSKRVFYQGRILTQALKNASKLCLTADVLGECTQASCSNSATTIMRLTENGVEKDTCYKLNIYQSIRQLTYDLIFPQYSIPGETISEIFLQHPRLISRIVLLPSQLGGLNYLACSRLFNRNIGDPLGTAVADLKRLIKCGALESWILYNLLARKPGKGSWATLAADPYSLNQEYLYPPTTILKRHTQNTLMEICRNPMLKGVFTDNAKEEENLLAKFLLDRDIVLPRVAHIIIDQSSIGRKKQIQGFFDTTRTIMRRSFEIKPLSTKKTLSVIEYNTNYLSYNYPVILNPLPIPGYLNYITDQTCSIDISRSLRKLSWSSLLNGRTLEGLETPDPIEVVNGFLIVGTGDCDFCMQGDDKFTWFFLPMGIIIDGNPETNPPIRVPYIGSRTEERRVASMAYIKGATHSLKAALRGAGVYIWAFGDTVVNWNDALDIANTRVKISLEQLQTLTPLPTSANITHRLDDGATTLKFTPASSYAFSSYTHISNDQQYLEIDQRVVDSNIIYQQLMITGLGIIETYHNPPIRTSTQEITLHLHTSSSCCVRSVDGCLICESNGEVPQITVPYTNTFVYDPDPLADYEIAHLDYLSYQAKIGSTDYYSLTDKIDLLAHLTAKQMINSIIGLDETVSIVNDAVILSDYTNNWISECSYTKIDLVFKLMAWNFLLELAFQMYYLRISSWTNIFDYTYMTLRRIPGTALNNIAATISHPKLLRRAMNLDIITPIHAPYLASLDYVKLSIDAIQWGVKQVLADLSNGIDLEILILSEDSMEISDRAMNLIARKLTLLALVKGENYTFPKIKGMPPEEKCLVLTEYLAMCYQNTHHLDPDLQKYLYNLTNPKLTAFPSNNFYLTRKILNQIRESDEGQYIITSYYESFEQLETDIILHSTLTAPYDNSENSNKVRFIPFDIFPHPESLEKYPLPVDHDSQSAISTLIPGPPSHHVLRPLGVSSTAWYKGISYCRYLETQKIQTGDHLYLAEGSGASMSLLELLFPGDTVYYNSLFSSGENPPQRNYAPLPTQFVQSVPYKLWQADLADDSNLIKDFVPLWNGNGAVTDLSTKDAVAFIIHKVGAEKASLVHIDLESTANINQQTLSRSQIHSLIIATTVLKRGGILIYKTSWLPFSRFSQLAGLLWCFFDRIHLIRSSYSDPHSHEVYLVCRLAADFRTIGFSAALVTATTLHNDGFTTIHPDVVCSYWQHHLENVGRVGKVIDEILDGLATNFFAGDNGLILRCGGTPSSRKWLEIDQLASFDLVQDALVTLITIHLKEIIEVQSSHTEDYTSLLFTPYNIGAAGKVRTIIKLILERSLMYTVRNWLVLPSSIRDSVRQDLELGSFRLMSILSEQTFLKKTPTKKYLLDQLTRTYISTFFNSHSVLPLHRPYQKQIWKALGSVIYCSETVDIPLIKDIQIEDINDFEDIERGIDGEEL</sequence>
<gene>
    <name type="primary">L</name>
</gene>
<comment type="function">
    <text evidence="2">RNA-directed RNA polymerase that catalyzes the transcription of viral mRNAs, their capping and polyadenylation. The template is composed of the viral RNA tightly encapsidated by the nucleoprotein (N). The viral polymerase binds to the genomic RNA at the 3' leader promoter, and transcribes subsequently all viral mRNAs with a decreasing efficiency. The first gene is the most transcribed, and the last the least transcribed. The viral phosphoprotein acts as a processivity factor. Capping is concomitant with initiation of mRNA transcription. Indeed, a GDP polyribonucleotidyl transferase (PRNTase) adds the cap structure when the nascent RNA chain length has reached few nucleotides. Ribose 2'-O methylation of viral mRNA cap precedes and facilitates subsequent guanine-N-7 methylation, both activities being carried by the viral polymerase. Polyadenylation of mRNAs occur by a stuttering mechanism at a slipery stop site present at the end viral genes. After finishing transcription of a mRNA, the polymerase can resume transcription of the downstream gene.</text>
</comment>
<comment type="function">
    <text evidence="2">RNA-directed RNA polymerase that catalyzes the replication of viral genomic RNA. The template is composed of the viral RNA tightly encapsidated by the nucleoprotein (N). The replicase mode is dependent on intracellular N protein concentration. In this mode, the polymerase replicates the whole viral genome without recognizing transcriptional signals, and the replicated genome is not caped or polyadenylated.</text>
</comment>
<comment type="catalytic activity">
    <reaction evidence="5">
        <text>RNA(n) + a ribonucleoside 5'-triphosphate = RNA(n+1) + diphosphate</text>
        <dbReference type="Rhea" id="RHEA:21248"/>
        <dbReference type="Rhea" id="RHEA-COMP:14527"/>
        <dbReference type="Rhea" id="RHEA-COMP:17342"/>
        <dbReference type="ChEBI" id="CHEBI:33019"/>
        <dbReference type="ChEBI" id="CHEBI:61557"/>
        <dbReference type="ChEBI" id="CHEBI:140395"/>
        <dbReference type="EC" id="2.7.7.48"/>
    </reaction>
</comment>
<comment type="catalytic activity">
    <reaction evidence="2">
        <text>a 5'-end (5'-triphosphoguanosine)-adenylyl-adenylyl-cytidylyl-adenosine in mRNA + 2 S-adenosyl-L-methionine = a 5'-end (N(7)-methyl 5'-triphosphoguanosine)-(2'-O-methyladenylyl)-adenylyl-cytidylyl-adenosine in mRNA + 2 S-adenosyl-L-homocysteine + H(+)</text>
        <dbReference type="Rhea" id="RHEA:65376"/>
        <dbReference type="Rhea" id="RHEA-COMP:16797"/>
        <dbReference type="Rhea" id="RHEA-COMP:16798"/>
        <dbReference type="ChEBI" id="CHEBI:15378"/>
        <dbReference type="ChEBI" id="CHEBI:57856"/>
        <dbReference type="ChEBI" id="CHEBI:59789"/>
        <dbReference type="ChEBI" id="CHEBI:156483"/>
        <dbReference type="ChEBI" id="CHEBI:156484"/>
        <dbReference type="EC" id="2.1.1.375"/>
    </reaction>
</comment>
<comment type="catalytic activity">
    <reaction evidence="2">
        <text>a 5'-end (5'-triphosphoguanosine)-adenylyl-adenylyl-cytidylyl-adenosine in mRNA + S-adenosyl-L-methionine = a 5'-end (5'-triphosphoguanosine)-(2'-O-methyladenylyl)-adenylyl-cytidylyl-adenosine in mRNA + S-adenosyl-L-homocysteine + H(+)</text>
        <dbReference type="Rhea" id="RHEA:65380"/>
        <dbReference type="Rhea" id="RHEA-COMP:16797"/>
        <dbReference type="Rhea" id="RHEA-COMP:16801"/>
        <dbReference type="ChEBI" id="CHEBI:15378"/>
        <dbReference type="ChEBI" id="CHEBI:57856"/>
        <dbReference type="ChEBI" id="CHEBI:59789"/>
        <dbReference type="ChEBI" id="CHEBI:156482"/>
        <dbReference type="ChEBI" id="CHEBI:156484"/>
    </reaction>
</comment>
<comment type="catalytic activity">
    <reaction evidence="3">
        <text>a 5'-end triphospho-adenylyl-adenylyl-cytidylyl-adenosine in mRNA + GDP + H(+) = a 5'-end (5'-triphosphoguanosine)-adenylyl-adenylyl-cytidylyl-adenosine in mRNA + diphosphate</text>
        <dbReference type="Rhea" id="RHEA:65436"/>
        <dbReference type="Rhea" id="RHEA-COMP:16797"/>
        <dbReference type="Rhea" id="RHEA-COMP:16799"/>
        <dbReference type="ChEBI" id="CHEBI:15378"/>
        <dbReference type="ChEBI" id="CHEBI:33019"/>
        <dbReference type="ChEBI" id="CHEBI:58189"/>
        <dbReference type="ChEBI" id="CHEBI:156484"/>
        <dbReference type="ChEBI" id="CHEBI:156503"/>
        <dbReference type="EC" id="2.7.7.88"/>
    </reaction>
</comment>
<comment type="catalytic activity">
    <reaction evidence="2">
        <text>a 5'-end (5'-triphosphoguanosine)-(2'-O-methyladenylyl)-adenylyl-cytidylyl-adenosine in mRNA + S-adenosyl-L-methionine = a 5'-end (N(7)-methyl 5'-triphosphoguanosine)-(2'-O-methyladenylyl)-adenylyl-cytidylyl-adenosine in mRNA + S-adenosyl-L-homocysteine</text>
        <dbReference type="Rhea" id="RHEA:65440"/>
        <dbReference type="Rhea" id="RHEA-COMP:16798"/>
        <dbReference type="Rhea" id="RHEA-COMP:16801"/>
        <dbReference type="ChEBI" id="CHEBI:57856"/>
        <dbReference type="ChEBI" id="CHEBI:59789"/>
        <dbReference type="ChEBI" id="CHEBI:156482"/>
        <dbReference type="ChEBI" id="CHEBI:156483"/>
    </reaction>
</comment>
<comment type="catalytic activity">
    <reaction evidence="3">
        <text>GTP + H2O = GDP + phosphate + H(+)</text>
        <dbReference type="Rhea" id="RHEA:19669"/>
        <dbReference type="ChEBI" id="CHEBI:15377"/>
        <dbReference type="ChEBI" id="CHEBI:15378"/>
        <dbReference type="ChEBI" id="CHEBI:37565"/>
        <dbReference type="ChEBI" id="CHEBI:43474"/>
        <dbReference type="ChEBI" id="CHEBI:58189"/>
    </reaction>
</comment>
<comment type="subunit">
    <text evidence="1">Interacts with the P protein.</text>
</comment>
<comment type="subcellular location">
    <subcellularLocation>
        <location evidence="7">Virion</location>
    </subcellularLocation>
    <subcellularLocation>
        <location evidence="1">Host cytoplasm</location>
    </subcellularLocation>
</comment>
<comment type="similarity">
    <text evidence="7">Belongs to the paramyxovirus L protein family.</text>
</comment>
<reference key="1">
    <citation type="journal article" date="1991" name="Nucleic Acids Res.">
        <title>Characterizations of the human parainfluenza type 2 virus gene encoding the L protein and the intergenic sequences.</title>
        <authorList>
            <person name="Kawano M."/>
            <person name="Okamoto K."/>
            <person name="Bando H."/>
            <person name="Kondo K."/>
            <person name="Tsurudome M."/>
            <person name="Komada H."/>
            <person name="Nishio M."/>
            <person name="Ito Y."/>
        </authorList>
    </citation>
    <scope>NUCLEOTIDE SEQUENCE [GENOMIC RNA]</scope>
</reference>